<dbReference type="EC" id="7.1.1.-" evidence="1"/>
<dbReference type="EMBL" id="CP000089">
    <property type="protein sequence ID" value="AAZ45708.1"/>
    <property type="molecule type" value="Genomic_DNA"/>
</dbReference>
<dbReference type="SMR" id="Q47HH3"/>
<dbReference type="STRING" id="159087.Daro_0952"/>
<dbReference type="KEGG" id="dar:Daro_0952"/>
<dbReference type="eggNOG" id="COG0649">
    <property type="taxonomic scope" value="Bacteria"/>
</dbReference>
<dbReference type="HOGENOM" id="CLU_015134_1_1_4"/>
<dbReference type="OrthoDB" id="9801496at2"/>
<dbReference type="GO" id="GO:0005886">
    <property type="term" value="C:plasma membrane"/>
    <property type="evidence" value="ECO:0007669"/>
    <property type="project" value="UniProtKB-SubCell"/>
</dbReference>
<dbReference type="GO" id="GO:0051287">
    <property type="term" value="F:NAD binding"/>
    <property type="evidence" value="ECO:0007669"/>
    <property type="project" value="InterPro"/>
</dbReference>
<dbReference type="GO" id="GO:0050136">
    <property type="term" value="F:NADH:ubiquinone reductase (non-electrogenic) activity"/>
    <property type="evidence" value="ECO:0007669"/>
    <property type="project" value="UniProtKB-UniRule"/>
</dbReference>
<dbReference type="GO" id="GO:0048038">
    <property type="term" value="F:quinone binding"/>
    <property type="evidence" value="ECO:0007669"/>
    <property type="project" value="UniProtKB-KW"/>
</dbReference>
<dbReference type="FunFam" id="1.10.645.10:FF:000005">
    <property type="entry name" value="NADH-quinone oxidoreductase subunit D"/>
    <property type="match status" value="1"/>
</dbReference>
<dbReference type="Gene3D" id="1.10.645.10">
    <property type="entry name" value="Cytochrome-c3 Hydrogenase, chain B"/>
    <property type="match status" value="1"/>
</dbReference>
<dbReference type="HAMAP" id="MF_01358">
    <property type="entry name" value="NDH1_NuoD"/>
    <property type="match status" value="1"/>
</dbReference>
<dbReference type="InterPro" id="IPR001135">
    <property type="entry name" value="NADH_Q_OxRdtase_suD"/>
</dbReference>
<dbReference type="InterPro" id="IPR014029">
    <property type="entry name" value="NADH_UbQ_OxRdtase_49kDa_CS"/>
</dbReference>
<dbReference type="InterPro" id="IPR022885">
    <property type="entry name" value="NDH1_su_D/H"/>
</dbReference>
<dbReference type="InterPro" id="IPR029014">
    <property type="entry name" value="NiFe-Hase_large"/>
</dbReference>
<dbReference type="NCBIfam" id="TIGR01962">
    <property type="entry name" value="NuoD"/>
    <property type="match status" value="1"/>
</dbReference>
<dbReference type="NCBIfam" id="NF004739">
    <property type="entry name" value="PRK06075.1"/>
    <property type="match status" value="1"/>
</dbReference>
<dbReference type="PANTHER" id="PTHR11993:SF10">
    <property type="entry name" value="NADH DEHYDROGENASE [UBIQUINONE] IRON-SULFUR PROTEIN 2, MITOCHONDRIAL"/>
    <property type="match status" value="1"/>
</dbReference>
<dbReference type="PANTHER" id="PTHR11993">
    <property type="entry name" value="NADH-UBIQUINONE OXIDOREDUCTASE 49 KDA SUBUNIT"/>
    <property type="match status" value="1"/>
</dbReference>
<dbReference type="Pfam" id="PF00346">
    <property type="entry name" value="Complex1_49kDa"/>
    <property type="match status" value="1"/>
</dbReference>
<dbReference type="SUPFAM" id="SSF56762">
    <property type="entry name" value="HydB/Nqo4-like"/>
    <property type="match status" value="1"/>
</dbReference>
<dbReference type="PROSITE" id="PS00535">
    <property type="entry name" value="COMPLEX1_49K"/>
    <property type="match status" value="1"/>
</dbReference>
<organism>
    <name type="scientific">Dechloromonas aromatica (strain RCB)</name>
    <dbReference type="NCBI Taxonomy" id="159087"/>
    <lineage>
        <taxon>Bacteria</taxon>
        <taxon>Pseudomonadati</taxon>
        <taxon>Pseudomonadota</taxon>
        <taxon>Betaproteobacteria</taxon>
        <taxon>Rhodocyclales</taxon>
        <taxon>Azonexaceae</taxon>
        <taxon>Dechloromonas</taxon>
    </lineage>
</organism>
<comment type="function">
    <text evidence="1">NDH-1 shuttles electrons from NADH, via FMN and iron-sulfur (Fe-S) centers, to quinones in the respiratory chain. The immediate electron acceptor for the enzyme in this species is believed to be ubiquinone. Couples the redox reaction to proton translocation (for every two electrons transferred, four hydrogen ions are translocated across the cytoplasmic membrane), and thus conserves the redox energy in a proton gradient.</text>
</comment>
<comment type="catalytic activity">
    <reaction evidence="1">
        <text>a quinone + NADH + 5 H(+)(in) = a quinol + NAD(+) + 4 H(+)(out)</text>
        <dbReference type="Rhea" id="RHEA:57888"/>
        <dbReference type="ChEBI" id="CHEBI:15378"/>
        <dbReference type="ChEBI" id="CHEBI:24646"/>
        <dbReference type="ChEBI" id="CHEBI:57540"/>
        <dbReference type="ChEBI" id="CHEBI:57945"/>
        <dbReference type="ChEBI" id="CHEBI:132124"/>
    </reaction>
</comment>
<comment type="subunit">
    <text evidence="1">NDH-1 is composed of 14 different subunits. Subunits NuoB, C, D, E, F, and G constitute the peripheral sector of the complex.</text>
</comment>
<comment type="subcellular location">
    <subcellularLocation>
        <location evidence="1">Cell inner membrane</location>
        <topology evidence="1">Peripheral membrane protein</topology>
        <orientation evidence="1">Cytoplasmic side</orientation>
    </subcellularLocation>
</comment>
<comment type="similarity">
    <text evidence="1">Belongs to the complex I 49 kDa subunit family.</text>
</comment>
<name>NUOD_DECAR</name>
<feature type="chain" id="PRO_0000371859" description="NADH-quinone oxidoreductase subunit D">
    <location>
        <begin position="1"/>
        <end position="417"/>
    </location>
</feature>
<accession>Q47HH3</accession>
<keyword id="KW-0997">Cell inner membrane</keyword>
<keyword id="KW-1003">Cell membrane</keyword>
<keyword id="KW-0472">Membrane</keyword>
<keyword id="KW-0520">NAD</keyword>
<keyword id="KW-0874">Quinone</keyword>
<keyword id="KW-1278">Translocase</keyword>
<keyword id="KW-0813">Transport</keyword>
<keyword id="KW-0830">Ubiquinone</keyword>
<sequence length="417" mass="47608">MADIRNFTLNFGPQHPAAHGVLRLVLELDGEVVQRADPHIGLLHRATEKLAETRTWVQSVPYMDRLDYVSMMCNEHAYCLATEKLLGIEVPERGKYIRVMFDEVTRILNHLLWIGCHALDVGAMTMALYTFREREDLMDVYEAVSGARMHAAYYRPGGVYRDLPDRMPQYQESTWTNAKKAAEKNENRSGSVLDFLEDFTNRFPTYHSEYHTLLTDNRIWKQRLVNVGVVTPERALQMGFTGAMLRGSGIAWDLRKKQPYAAYDKINFDVPVGVNGDSYDRYLVRMEEMIQSNNIIKQCIAWLRKNPGPVITDNNKVAPPPRENMKTNMEELIHHFKLFTEGIHVPAGEAYAAVEHPKGEFGIYFVSDGANKPYRMKIRAPGFVHLAGLDEMSRGHMIADVVTIIGSQDIVFGEIDR</sequence>
<protein>
    <recommendedName>
        <fullName evidence="1">NADH-quinone oxidoreductase subunit D</fullName>
        <ecNumber evidence="1">7.1.1.-</ecNumber>
    </recommendedName>
    <alternativeName>
        <fullName evidence="1">NADH dehydrogenase I subunit D</fullName>
    </alternativeName>
    <alternativeName>
        <fullName evidence="1">NDH-1 subunit D</fullName>
    </alternativeName>
</protein>
<evidence type="ECO:0000255" key="1">
    <source>
        <dbReference type="HAMAP-Rule" id="MF_01358"/>
    </source>
</evidence>
<reference key="1">
    <citation type="journal article" date="2009" name="BMC Genomics">
        <title>Metabolic analysis of the soil microbe Dechloromonas aromatica str. RCB: indications of a surprisingly complex life-style and cryptic anaerobic pathways for aromatic degradation.</title>
        <authorList>
            <person name="Salinero K.K."/>
            <person name="Keller K."/>
            <person name="Feil W.S."/>
            <person name="Feil H."/>
            <person name="Trong S."/>
            <person name="Di Bartolo G."/>
            <person name="Lapidus A."/>
        </authorList>
    </citation>
    <scope>NUCLEOTIDE SEQUENCE [LARGE SCALE GENOMIC DNA]</scope>
    <source>
        <strain>RCB</strain>
    </source>
</reference>
<gene>
    <name evidence="1" type="primary">nuoD</name>
    <name type="ordered locus">Daro_0952</name>
</gene>
<proteinExistence type="inferred from homology"/>